<protein>
    <recommendedName>
        <fullName>Odorant receptor 49b</fullName>
    </recommendedName>
</protein>
<comment type="function">
    <text evidence="4">Odorant receptor which mediates acceptance or avoidance behavior, depending on its substrates. The odorant receptor repertoire encodes a large collection of odor stimuli that vary widely in identity, intensity, and duration. May form a complex with Orco to form odorant-sensing units, providing sensitive and prolonged odorant signaling and calcium permeability.</text>
</comment>
<comment type="subunit">
    <text evidence="1">Interacts with Orco. Complexes exist early in the endomembrane system in olfactory sensory neurons (OSNs), coupling these complexes to the conserved ciliary trafficking pathway (By similarity).</text>
</comment>
<comment type="subcellular location">
    <subcellularLocation>
        <location evidence="1">Cell membrane</location>
        <topology evidence="1">Multi-pass membrane protein</topology>
    </subcellularLocation>
</comment>
<comment type="tissue specificity">
    <text evidence="3">Expressed in olfactory sensory neurons in the antenna.</text>
</comment>
<comment type="miscellaneous">
    <text>The atypical heteromeric and topological design of the odorant receptors appears to be an insect-specific solution for odor recognition, making the OR/Orco complex an attractive target for the development of highly selective insect repellents to disrupt olfactory-mediated host-seeking behaviors of insect disease vectors. Odor-evoked OR currents are independent of known G-protein-coupled second messenger pathways.</text>
</comment>
<comment type="similarity">
    <text evidence="5">Belongs to the insect chemoreceptor superfamily. Heteromeric odorant receptor channel (TC 1.A.69) family. Or30a subfamily.</text>
</comment>
<keyword id="KW-1003">Cell membrane</keyword>
<keyword id="KW-0472">Membrane</keyword>
<keyword id="KW-0552">Olfaction</keyword>
<keyword id="KW-0675">Receptor</keyword>
<keyword id="KW-1185">Reference proteome</keyword>
<keyword id="KW-0716">Sensory transduction</keyword>
<keyword id="KW-0807">Transducer</keyword>
<keyword id="KW-0812">Transmembrane</keyword>
<keyword id="KW-1133">Transmembrane helix</keyword>
<proteinExistence type="evidence at transcript level"/>
<name>OR49B_DROME</name>
<feature type="chain" id="PRO_0000174253" description="Odorant receptor 49b">
    <location>
        <begin position="1"/>
        <end position="375"/>
    </location>
</feature>
<feature type="topological domain" description="Cytoplasmic" evidence="2">
    <location>
        <begin position="1"/>
        <end position="28"/>
    </location>
</feature>
<feature type="transmembrane region" description="Helical; Name=1" evidence="2">
    <location>
        <begin position="29"/>
        <end position="49"/>
    </location>
</feature>
<feature type="topological domain" description="Extracellular" evidence="2">
    <location>
        <begin position="50"/>
        <end position="60"/>
    </location>
</feature>
<feature type="transmembrane region" description="Helical; Name=2" evidence="2">
    <location>
        <begin position="61"/>
        <end position="77"/>
    </location>
</feature>
<feature type="topological domain" description="Cytoplasmic" evidence="2">
    <location>
        <begin position="78"/>
        <end position="121"/>
    </location>
</feature>
<feature type="transmembrane region" description="Helical; Name=3" evidence="2">
    <location>
        <begin position="122"/>
        <end position="142"/>
    </location>
</feature>
<feature type="topological domain" description="Extracellular" evidence="2">
    <location>
        <begin position="143"/>
        <end position="176"/>
    </location>
</feature>
<feature type="transmembrane region" description="Helical; Name=4" evidence="2">
    <location>
        <begin position="177"/>
        <end position="197"/>
    </location>
</feature>
<feature type="topological domain" description="Cytoplasmic" evidence="2">
    <location>
        <begin position="198"/>
        <end position="251"/>
    </location>
</feature>
<feature type="transmembrane region" description="Helical; Name=5" evidence="2">
    <location>
        <begin position="252"/>
        <end position="272"/>
    </location>
</feature>
<feature type="topological domain" description="Extracellular" evidence="2">
    <location>
        <begin position="273"/>
        <end position="278"/>
    </location>
</feature>
<feature type="transmembrane region" description="Helical; Name=6" evidence="2">
    <location>
        <begin position="279"/>
        <end position="299"/>
    </location>
</feature>
<feature type="topological domain" description="Cytoplasmic" evidence="2">
    <location>
        <begin position="300"/>
        <end position="342"/>
    </location>
</feature>
<feature type="transmembrane region" description="Helical; Name=7" evidence="2">
    <location>
        <begin position="343"/>
        <end position="363"/>
    </location>
</feature>
<feature type="topological domain" description="Extracellular" evidence="2">
    <location>
        <begin position="364"/>
        <end position="375"/>
    </location>
</feature>
<feature type="sequence conflict" description="In Ref. 4." evidence="5" ref="4">
    <original>VL</original>
    <variation>GE</variation>
    <location>
        <begin position="145"/>
        <end position="146"/>
    </location>
</feature>
<feature type="sequence conflict" description="In Ref. 4." evidence="5" ref="4">
    <original>S</original>
    <variation>SRYVC</variation>
    <location>
        <position position="274"/>
    </location>
</feature>
<dbReference type="EMBL" id="AE013599">
    <property type="protein sequence ID" value="AAF58452.1"/>
    <property type="molecule type" value="Genomic_DNA"/>
</dbReference>
<dbReference type="EMBL" id="BT024438">
    <property type="protein sequence ID" value="ABC86500.1"/>
    <property type="molecule type" value="mRNA"/>
</dbReference>
<dbReference type="RefSeq" id="NP_523721.1">
    <property type="nucleotide sequence ID" value="NM_078997.3"/>
</dbReference>
<dbReference type="SMR" id="Q9V6H2"/>
<dbReference type="FunCoup" id="Q9V6H2">
    <property type="interactions" value="44"/>
</dbReference>
<dbReference type="IntAct" id="Q9V6H2">
    <property type="interactions" value="1"/>
</dbReference>
<dbReference type="STRING" id="7227.FBpp0086894"/>
<dbReference type="PaxDb" id="7227-FBpp0086894"/>
<dbReference type="DNASU" id="36413"/>
<dbReference type="EnsemblMetazoa" id="FBtr0087781">
    <property type="protein sequence ID" value="FBpp0086894"/>
    <property type="gene ID" value="FBgn0028963"/>
</dbReference>
<dbReference type="GeneID" id="36413"/>
<dbReference type="KEGG" id="dme:Dmel_CG17584"/>
<dbReference type="AGR" id="FB:FBgn0028963"/>
<dbReference type="CTD" id="36413"/>
<dbReference type="FlyBase" id="FBgn0028963">
    <property type="gene designation" value="Or49b"/>
</dbReference>
<dbReference type="VEuPathDB" id="VectorBase:FBgn0028963"/>
<dbReference type="eggNOG" id="ENOG502STQW">
    <property type="taxonomic scope" value="Eukaryota"/>
</dbReference>
<dbReference type="GeneTree" id="ENSGT00520000056289"/>
<dbReference type="HOGENOM" id="CLU_033399_9_0_1"/>
<dbReference type="InParanoid" id="Q9V6H2"/>
<dbReference type="OMA" id="YWYANEL"/>
<dbReference type="OrthoDB" id="7677057at2759"/>
<dbReference type="PhylomeDB" id="Q9V6H2"/>
<dbReference type="BioGRID-ORCS" id="36413">
    <property type="hits" value="0 hits in 1 CRISPR screen"/>
</dbReference>
<dbReference type="GenomeRNAi" id="36413"/>
<dbReference type="PRO" id="PR:Q9V6H2"/>
<dbReference type="Proteomes" id="UP000000803">
    <property type="component" value="Chromosome 2R"/>
</dbReference>
<dbReference type="Bgee" id="FBgn0028963">
    <property type="expression patterns" value="Expressed in adult middle midgut class II enteroendocrine cell in adult midgut (Drosophila) and 3 other cell types or tissues"/>
</dbReference>
<dbReference type="ExpressionAtlas" id="Q9V6H2">
    <property type="expression patterns" value="baseline and differential"/>
</dbReference>
<dbReference type="GO" id="GO:0032590">
    <property type="term" value="C:dendrite membrane"/>
    <property type="evidence" value="ECO:0000250"/>
    <property type="project" value="FlyBase"/>
</dbReference>
<dbReference type="GO" id="GO:0016020">
    <property type="term" value="C:membrane"/>
    <property type="evidence" value="ECO:0000303"/>
    <property type="project" value="UniProtKB"/>
</dbReference>
<dbReference type="GO" id="GO:0005886">
    <property type="term" value="C:plasma membrane"/>
    <property type="evidence" value="ECO:0007005"/>
    <property type="project" value="FlyBase"/>
</dbReference>
<dbReference type="GO" id="GO:0170020">
    <property type="term" value="F:ionotropic olfactory receptor activity"/>
    <property type="evidence" value="ECO:0007005"/>
    <property type="project" value="FlyBase"/>
</dbReference>
<dbReference type="GO" id="GO:0005549">
    <property type="term" value="F:odorant binding"/>
    <property type="evidence" value="ECO:0000250"/>
    <property type="project" value="FlyBase"/>
</dbReference>
<dbReference type="GO" id="GO:0004984">
    <property type="term" value="F:olfactory receptor activity"/>
    <property type="evidence" value="ECO:0000318"/>
    <property type="project" value="GO_Central"/>
</dbReference>
<dbReference type="GO" id="GO:0050911">
    <property type="term" value="P:detection of chemical stimulus involved in sensory perception of smell"/>
    <property type="evidence" value="ECO:0007005"/>
    <property type="project" value="FlyBase"/>
</dbReference>
<dbReference type="GO" id="GO:0007608">
    <property type="term" value="P:sensory perception of smell"/>
    <property type="evidence" value="ECO:0000303"/>
    <property type="project" value="UniProtKB"/>
</dbReference>
<dbReference type="GO" id="GO:0007165">
    <property type="term" value="P:signal transduction"/>
    <property type="evidence" value="ECO:0007669"/>
    <property type="project" value="UniProtKB-KW"/>
</dbReference>
<dbReference type="InterPro" id="IPR004117">
    <property type="entry name" value="7tm6_olfct_rcpt"/>
</dbReference>
<dbReference type="PANTHER" id="PTHR21137">
    <property type="entry name" value="ODORANT RECEPTOR"/>
    <property type="match status" value="1"/>
</dbReference>
<dbReference type="PANTHER" id="PTHR21137:SF3">
    <property type="entry name" value="ODORANT RECEPTOR 30A-RELATED"/>
    <property type="match status" value="1"/>
</dbReference>
<dbReference type="Pfam" id="PF02949">
    <property type="entry name" value="7tm_6"/>
    <property type="match status" value="1"/>
</dbReference>
<accession>Q9V6H2</accession>
<accession>Q29QF2</accession>
<accession>Q9U6X5</accession>
<reference key="1">
    <citation type="journal article" date="2000" name="Science">
        <title>The genome sequence of Drosophila melanogaster.</title>
        <authorList>
            <person name="Adams M.D."/>
            <person name="Celniker S.E."/>
            <person name="Holt R.A."/>
            <person name="Evans C.A."/>
            <person name="Gocayne J.D."/>
            <person name="Amanatides P.G."/>
            <person name="Scherer S.E."/>
            <person name="Li P.W."/>
            <person name="Hoskins R.A."/>
            <person name="Galle R.F."/>
            <person name="George R.A."/>
            <person name="Lewis S.E."/>
            <person name="Richards S."/>
            <person name="Ashburner M."/>
            <person name="Henderson S.N."/>
            <person name="Sutton G.G."/>
            <person name="Wortman J.R."/>
            <person name="Yandell M.D."/>
            <person name="Zhang Q."/>
            <person name="Chen L.X."/>
            <person name="Brandon R.C."/>
            <person name="Rogers Y.-H.C."/>
            <person name="Blazej R.G."/>
            <person name="Champe M."/>
            <person name="Pfeiffer B.D."/>
            <person name="Wan K.H."/>
            <person name="Doyle C."/>
            <person name="Baxter E.G."/>
            <person name="Helt G."/>
            <person name="Nelson C.R."/>
            <person name="Miklos G.L.G."/>
            <person name="Abril J.F."/>
            <person name="Agbayani A."/>
            <person name="An H.-J."/>
            <person name="Andrews-Pfannkoch C."/>
            <person name="Baldwin D."/>
            <person name="Ballew R.M."/>
            <person name="Basu A."/>
            <person name="Baxendale J."/>
            <person name="Bayraktaroglu L."/>
            <person name="Beasley E.M."/>
            <person name="Beeson K.Y."/>
            <person name="Benos P.V."/>
            <person name="Berman B.P."/>
            <person name="Bhandari D."/>
            <person name="Bolshakov S."/>
            <person name="Borkova D."/>
            <person name="Botchan M.R."/>
            <person name="Bouck J."/>
            <person name="Brokstein P."/>
            <person name="Brottier P."/>
            <person name="Burtis K.C."/>
            <person name="Busam D.A."/>
            <person name="Butler H."/>
            <person name="Cadieu E."/>
            <person name="Center A."/>
            <person name="Chandra I."/>
            <person name="Cherry J.M."/>
            <person name="Cawley S."/>
            <person name="Dahlke C."/>
            <person name="Davenport L.B."/>
            <person name="Davies P."/>
            <person name="de Pablos B."/>
            <person name="Delcher A."/>
            <person name="Deng Z."/>
            <person name="Mays A.D."/>
            <person name="Dew I."/>
            <person name="Dietz S.M."/>
            <person name="Dodson K."/>
            <person name="Doup L.E."/>
            <person name="Downes M."/>
            <person name="Dugan-Rocha S."/>
            <person name="Dunkov B.C."/>
            <person name="Dunn P."/>
            <person name="Durbin K.J."/>
            <person name="Evangelista C.C."/>
            <person name="Ferraz C."/>
            <person name="Ferriera S."/>
            <person name="Fleischmann W."/>
            <person name="Fosler C."/>
            <person name="Gabrielian A.E."/>
            <person name="Garg N.S."/>
            <person name="Gelbart W.M."/>
            <person name="Glasser K."/>
            <person name="Glodek A."/>
            <person name="Gong F."/>
            <person name="Gorrell J.H."/>
            <person name="Gu Z."/>
            <person name="Guan P."/>
            <person name="Harris M."/>
            <person name="Harris N.L."/>
            <person name="Harvey D.A."/>
            <person name="Heiman T.J."/>
            <person name="Hernandez J.R."/>
            <person name="Houck J."/>
            <person name="Hostin D."/>
            <person name="Houston K.A."/>
            <person name="Howland T.J."/>
            <person name="Wei M.-H."/>
            <person name="Ibegwam C."/>
            <person name="Jalali M."/>
            <person name="Kalush F."/>
            <person name="Karpen G.H."/>
            <person name="Ke Z."/>
            <person name="Kennison J.A."/>
            <person name="Ketchum K.A."/>
            <person name="Kimmel B.E."/>
            <person name="Kodira C.D."/>
            <person name="Kraft C.L."/>
            <person name="Kravitz S."/>
            <person name="Kulp D."/>
            <person name="Lai Z."/>
            <person name="Lasko P."/>
            <person name="Lei Y."/>
            <person name="Levitsky A.A."/>
            <person name="Li J.H."/>
            <person name="Li Z."/>
            <person name="Liang Y."/>
            <person name="Lin X."/>
            <person name="Liu X."/>
            <person name="Mattei B."/>
            <person name="McIntosh T.C."/>
            <person name="McLeod M.P."/>
            <person name="McPherson D."/>
            <person name="Merkulov G."/>
            <person name="Milshina N.V."/>
            <person name="Mobarry C."/>
            <person name="Morris J."/>
            <person name="Moshrefi A."/>
            <person name="Mount S.M."/>
            <person name="Moy M."/>
            <person name="Murphy B."/>
            <person name="Murphy L."/>
            <person name="Muzny D.M."/>
            <person name="Nelson D.L."/>
            <person name="Nelson D.R."/>
            <person name="Nelson K.A."/>
            <person name="Nixon K."/>
            <person name="Nusskern D.R."/>
            <person name="Pacleb J.M."/>
            <person name="Palazzolo M."/>
            <person name="Pittman G.S."/>
            <person name="Pan S."/>
            <person name="Pollard J."/>
            <person name="Puri V."/>
            <person name="Reese M.G."/>
            <person name="Reinert K."/>
            <person name="Remington K."/>
            <person name="Saunders R.D.C."/>
            <person name="Scheeler F."/>
            <person name="Shen H."/>
            <person name="Shue B.C."/>
            <person name="Siden-Kiamos I."/>
            <person name="Simpson M."/>
            <person name="Skupski M.P."/>
            <person name="Smith T.J."/>
            <person name="Spier E."/>
            <person name="Spradling A.C."/>
            <person name="Stapleton M."/>
            <person name="Strong R."/>
            <person name="Sun E."/>
            <person name="Svirskas R."/>
            <person name="Tector C."/>
            <person name="Turner R."/>
            <person name="Venter E."/>
            <person name="Wang A.H."/>
            <person name="Wang X."/>
            <person name="Wang Z.-Y."/>
            <person name="Wassarman D.A."/>
            <person name="Weinstock G.M."/>
            <person name="Weissenbach J."/>
            <person name="Williams S.M."/>
            <person name="Woodage T."/>
            <person name="Worley K.C."/>
            <person name="Wu D."/>
            <person name="Yang S."/>
            <person name="Yao Q.A."/>
            <person name="Ye J."/>
            <person name="Yeh R.-F."/>
            <person name="Zaveri J.S."/>
            <person name="Zhan M."/>
            <person name="Zhang G."/>
            <person name="Zhao Q."/>
            <person name="Zheng L."/>
            <person name="Zheng X.H."/>
            <person name="Zhong F.N."/>
            <person name="Zhong W."/>
            <person name="Zhou X."/>
            <person name="Zhu S.C."/>
            <person name="Zhu X."/>
            <person name="Smith H.O."/>
            <person name="Gibbs R.A."/>
            <person name="Myers E.W."/>
            <person name="Rubin G.M."/>
            <person name="Venter J.C."/>
        </authorList>
    </citation>
    <scope>NUCLEOTIDE SEQUENCE [LARGE SCALE GENOMIC DNA]</scope>
    <source>
        <strain>Berkeley</strain>
    </source>
</reference>
<reference key="2">
    <citation type="journal article" date="2002" name="Genome Biol.">
        <title>Annotation of the Drosophila melanogaster euchromatic genome: a systematic review.</title>
        <authorList>
            <person name="Misra S."/>
            <person name="Crosby M.A."/>
            <person name="Mungall C.J."/>
            <person name="Matthews B.B."/>
            <person name="Campbell K.S."/>
            <person name="Hradecky P."/>
            <person name="Huang Y."/>
            <person name="Kaminker J.S."/>
            <person name="Millburn G.H."/>
            <person name="Prochnik S.E."/>
            <person name="Smith C.D."/>
            <person name="Tupy J.L."/>
            <person name="Whitfield E.J."/>
            <person name="Bayraktaroglu L."/>
            <person name="Berman B.P."/>
            <person name="Bettencourt B.R."/>
            <person name="Celniker S.E."/>
            <person name="de Grey A.D.N.J."/>
            <person name="Drysdale R.A."/>
            <person name="Harris N.L."/>
            <person name="Richter J."/>
            <person name="Russo S."/>
            <person name="Schroeder A.J."/>
            <person name="Shu S.Q."/>
            <person name="Stapleton M."/>
            <person name="Yamada C."/>
            <person name="Ashburner M."/>
            <person name="Gelbart W.M."/>
            <person name="Rubin G.M."/>
            <person name="Lewis S.E."/>
        </authorList>
    </citation>
    <scope>GENOME REANNOTATION</scope>
    <source>
        <strain>Berkeley</strain>
    </source>
</reference>
<reference key="3">
    <citation type="submission" date="2006-01" db="EMBL/GenBank/DDBJ databases">
        <authorList>
            <person name="Stapleton M."/>
            <person name="Carlson J.W."/>
            <person name="Chavez C."/>
            <person name="Frise E."/>
            <person name="George R.A."/>
            <person name="Pacleb J.M."/>
            <person name="Park S."/>
            <person name="Wan K.H."/>
            <person name="Yu C."/>
            <person name="Celniker S.E."/>
        </authorList>
    </citation>
    <scope>NUCLEOTIDE SEQUENCE [LARGE SCALE MRNA]</scope>
</reference>
<reference key="4">
    <citation type="journal article" date="1999" name="Genomics">
        <title>Identification of candidate Drosophila olfactory receptors from genomic DNA sequence.</title>
        <authorList>
            <person name="Gao Q."/>
            <person name="Chess A."/>
        </authorList>
    </citation>
    <scope>NUCLEOTIDE SEQUENCE [GENOMIC DNA] OF 1-342</scope>
</reference>
<reference key="5">
    <citation type="journal article" date="2000" name="Cell">
        <title>An olfactory sensory map in the fly brain.</title>
        <authorList>
            <person name="Vosshall L.B."/>
            <person name="Wong A.M."/>
            <person name="Axel R."/>
        </authorList>
    </citation>
    <scope>TISSUE SPECIFICITY</scope>
</reference>
<reference key="6">
    <citation type="journal article" date="2006" name="Cell">
        <title>Coding of odors by a receptor repertoire.</title>
        <authorList>
            <person name="Hallem E.A."/>
            <person name="Carlson J.R."/>
        </authorList>
    </citation>
    <scope>FUNCTION</scope>
</reference>
<organism>
    <name type="scientific">Drosophila melanogaster</name>
    <name type="common">Fruit fly</name>
    <dbReference type="NCBI Taxonomy" id="7227"/>
    <lineage>
        <taxon>Eukaryota</taxon>
        <taxon>Metazoa</taxon>
        <taxon>Ecdysozoa</taxon>
        <taxon>Arthropoda</taxon>
        <taxon>Hexapoda</taxon>
        <taxon>Insecta</taxon>
        <taxon>Pterygota</taxon>
        <taxon>Neoptera</taxon>
        <taxon>Endopterygota</taxon>
        <taxon>Diptera</taxon>
        <taxon>Brachycera</taxon>
        <taxon>Muscomorpha</taxon>
        <taxon>Ephydroidea</taxon>
        <taxon>Drosophilidae</taxon>
        <taxon>Drosophila</taxon>
        <taxon>Sophophora</taxon>
    </lineage>
</organism>
<gene>
    <name type="primary">Or49b</name>
    <name type="synonym">AN13</name>
    <name type="ORF">CG17584</name>
</gene>
<sequence>MFEDIQLIYMNIKILRFWALLYDKNLRRYVCIGLASFHIFTQIVYMMSTNEGLTGIIRNSYMLVLWINTVLRAYLLLADHDRYLALIQKLTEAYYDLLNLNDSYISEILDQVNKVGKLMARGNLFFGMLTSMGFGLYPLSSSERVLPFGSKIPGLNEYESPYYEMWYIFQMLITPMGCCMYIPYTSLIVGLIMFGIVRCKALQHRLRQVALKHPYGDRDPRELREEIIACIRYQQSIIEYMDHINELTTMMFLFELMAFSALLCALLFMLIIVSGTSQLIIVCMYINMILAQILALYWYANELREQNLAVATAAYETEWFTFDVPLRKNILFMMMRAQRPAAILLGNIRPITLELFQNLLNTTYTFFTVLKRVYG</sequence>
<evidence type="ECO:0000250" key="1"/>
<evidence type="ECO:0000255" key="2"/>
<evidence type="ECO:0000269" key="3">
    <source>
    </source>
</evidence>
<evidence type="ECO:0000269" key="4">
    <source>
    </source>
</evidence>
<evidence type="ECO:0000305" key="5"/>